<proteinExistence type="inferred from homology"/>
<evidence type="ECO:0000255" key="1">
    <source>
        <dbReference type="HAMAP-Rule" id="MF_00736"/>
    </source>
</evidence>
<evidence type="ECO:0000305" key="2"/>
<sequence>MAKKIAGYVKLQVPAGDAKPAPPIGPALGQRGLNIMEFCKAFNAKTAQMEKGTPIPVVITAYADRSFTFEMKLPPVSYFLKKASGIQSGAKTTGRGFIGKVTKAQVREIAEKKLPDLNCQSVDAAATMIEGSARSMGLQVVE</sequence>
<keyword id="KW-0488">Methylation</keyword>
<keyword id="KW-1185">Reference proteome</keyword>
<keyword id="KW-0687">Ribonucleoprotein</keyword>
<keyword id="KW-0689">Ribosomal protein</keyword>
<keyword id="KW-0694">RNA-binding</keyword>
<keyword id="KW-0699">rRNA-binding</keyword>
<comment type="function">
    <text evidence="1">Forms part of the ribosomal stalk which helps the ribosome interact with GTP-bound translation factors.</text>
</comment>
<comment type="subunit">
    <text evidence="1">Part of the ribosomal stalk of the 50S ribosomal subunit. Interacts with L10 and the large rRNA to form the base of the stalk. L10 forms an elongated spine to which L12 dimers bind in a sequential fashion forming a multimeric L10(L12)X complex.</text>
</comment>
<comment type="PTM">
    <text evidence="1">One or more lysine residues are methylated.</text>
</comment>
<comment type="similarity">
    <text evidence="1">Belongs to the universal ribosomal protein uL11 family.</text>
</comment>
<protein>
    <recommendedName>
        <fullName evidence="1">Large ribosomal subunit protein uL11</fullName>
    </recommendedName>
    <alternativeName>
        <fullName evidence="2">50S ribosomal protein L11</fullName>
    </alternativeName>
</protein>
<accession>B2IK51</accession>
<organism>
    <name type="scientific">Beijerinckia indica subsp. indica (strain ATCC 9039 / DSM 1715 / NCIMB 8712)</name>
    <dbReference type="NCBI Taxonomy" id="395963"/>
    <lineage>
        <taxon>Bacteria</taxon>
        <taxon>Pseudomonadati</taxon>
        <taxon>Pseudomonadota</taxon>
        <taxon>Alphaproteobacteria</taxon>
        <taxon>Hyphomicrobiales</taxon>
        <taxon>Beijerinckiaceae</taxon>
        <taxon>Beijerinckia</taxon>
    </lineage>
</organism>
<gene>
    <name evidence="1" type="primary">rplK</name>
    <name type="ordered locus">Bind_1343</name>
</gene>
<reference key="1">
    <citation type="journal article" date="2010" name="J. Bacteriol.">
        <title>Complete genome sequence of Beijerinckia indica subsp. indica.</title>
        <authorList>
            <person name="Tamas I."/>
            <person name="Dedysh S.N."/>
            <person name="Liesack W."/>
            <person name="Stott M.B."/>
            <person name="Alam M."/>
            <person name="Murrell J.C."/>
            <person name="Dunfield P.F."/>
        </authorList>
    </citation>
    <scope>NUCLEOTIDE SEQUENCE [LARGE SCALE GENOMIC DNA]</scope>
    <source>
        <strain>ATCC 9039 / DSM 1715 / NCIMB 8712</strain>
    </source>
</reference>
<name>RL11_BEII9</name>
<feature type="chain" id="PRO_1000132866" description="Large ribosomal subunit protein uL11">
    <location>
        <begin position="1"/>
        <end position="142"/>
    </location>
</feature>
<dbReference type="EMBL" id="CP001016">
    <property type="protein sequence ID" value="ACB94983.1"/>
    <property type="molecule type" value="Genomic_DNA"/>
</dbReference>
<dbReference type="RefSeq" id="WP_012384340.1">
    <property type="nucleotide sequence ID" value="NC_010581.1"/>
</dbReference>
<dbReference type="SMR" id="B2IK51"/>
<dbReference type="STRING" id="395963.Bind_1343"/>
<dbReference type="KEGG" id="bid:Bind_1343"/>
<dbReference type="eggNOG" id="COG0080">
    <property type="taxonomic scope" value="Bacteria"/>
</dbReference>
<dbReference type="HOGENOM" id="CLU_074237_2_0_5"/>
<dbReference type="OrthoDB" id="9802408at2"/>
<dbReference type="Proteomes" id="UP000001695">
    <property type="component" value="Chromosome"/>
</dbReference>
<dbReference type="GO" id="GO:0022625">
    <property type="term" value="C:cytosolic large ribosomal subunit"/>
    <property type="evidence" value="ECO:0007669"/>
    <property type="project" value="TreeGrafter"/>
</dbReference>
<dbReference type="GO" id="GO:0070180">
    <property type="term" value="F:large ribosomal subunit rRNA binding"/>
    <property type="evidence" value="ECO:0007669"/>
    <property type="project" value="UniProtKB-UniRule"/>
</dbReference>
<dbReference type="GO" id="GO:0003735">
    <property type="term" value="F:structural constituent of ribosome"/>
    <property type="evidence" value="ECO:0007669"/>
    <property type="project" value="InterPro"/>
</dbReference>
<dbReference type="GO" id="GO:0006412">
    <property type="term" value="P:translation"/>
    <property type="evidence" value="ECO:0007669"/>
    <property type="project" value="UniProtKB-UniRule"/>
</dbReference>
<dbReference type="CDD" id="cd00349">
    <property type="entry name" value="Ribosomal_L11"/>
    <property type="match status" value="1"/>
</dbReference>
<dbReference type="FunFam" id="1.10.10.250:FF:000001">
    <property type="entry name" value="50S ribosomal protein L11"/>
    <property type="match status" value="1"/>
</dbReference>
<dbReference type="FunFam" id="3.30.1550.10:FF:000001">
    <property type="entry name" value="50S ribosomal protein L11"/>
    <property type="match status" value="1"/>
</dbReference>
<dbReference type="Gene3D" id="1.10.10.250">
    <property type="entry name" value="Ribosomal protein L11, C-terminal domain"/>
    <property type="match status" value="1"/>
</dbReference>
<dbReference type="Gene3D" id="3.30.1550.10">
    <property type="entry name" value="Ribosomal protein L11/L12, N-terminal domain"/>
    <property type="match status" value="1"/>
</dbReference>
<dbReference type="HAMAP" id="MF_00736">
    <property type="entry name" value="Ribosomal_uL11"/>
    <property type="match status" value="1"/>
</dbReference>
<dbReference type="InterPro" id="IPR000911">
    <property type="entry name" value="Ribosomal_uL11"/>
</dbReference>
<dbReference type="InterPro" id="IPR006519">
    <property type="entry name" value="Ribosomal_uL11_bac-typ"/>
</dbReference>
<dbReference type="InterPro" id="IPR020783">
    <property type="entry name" value="Ribosomal_uL11_C"/>
</dbReference>
<dbReference type="InterPro" id="IPR036769">
    <property type="entry name" value="Ribosomal_uL11_C_sf"/>
</dbReference>
<dbReference type="InterPro" id="IPR020784">
    <property type="entry name" value="Ribosomal_uL11_N"/>
</dbReference>
<dbReference type="InterPro" id="IPR036796">
    <property type="entry name" value="Ribosomal_uL11_N_sf"/>
</dbReference>
<dbReference type="NCBIfam" id="TIGR01632">
    <property type="entry name" value="L11_bact"/>
    <property type="match status" value="1"/>
</dbReference>
<dbReference type="PANTHER" id="PTHR11661">
    <property type="entry name" value="60S RIBOSOMAL PROTEIN L12"/>
    <property type="match status" value="1"/>
</dbReference>
<dbReference type="PANTHER" id="PTHR11661:SF1">
    <property type="entry name" value="LARGE RIBOSOMAL SUBUNIT PROTEIN UL11M"/>
    <property type="match status" value="1"/>
</dbReference>
<dbReference type="Pfam" id="PF00298">
    <property type="entry name" value="Ribosomal_L11"/>
    <property type="match status" value="1"/>
</dbReference>
<dbReference type="Pfam" id="PF03946">
    <property type="entry name" value="Ribosomal_L11_N"/>
    <property type="match status" value="1"/>
</dbReference>
<dbReference type="SMART" id="SM00649">
    <property type="entry name" value="RL11"/>
    <property type="match status" value="1"/>
</dbReference>
<dbReference type="SUPFAM" id="SSF54747">
    <property type="entry name" value="Ribosomal L11/L12e N-terminal domain"/>
    <property type="match status" value="1"/>
</dbReference>
<dbReference type="SUPFAM" id="SSF46906">
    <property type="entry name" value="Ribosomal protein L11, C-terminal domain"/>
    <property type="match status" value="1"/>
</dbReference>